<keyword id="KW-0687">Ribonucleoprotein</keyword>
<keyword id="KW-0689">Ribosomal protein</keyword>
<keyword id="KW-0694">RNA-binding</keyword>
<keyword id="KW-0699">rRNA-binding</keyword>
<feature type="chain" id="PRO_1000142767" description="Large ribosomal subunit protein uL15">
    <location>
        <begin position="1"/>
        <end position="144"/>
    </location>
</feature>
<feature type="region of interest" description="Disordered" evidence="2">
    <location>
        <begin position="1"/>
        <end position="59"/>
    </location>
</feature>
<feature type="compositionally biased region" description="Gly residues" evidence="2">
    <location>
        <begin position="21"/>
        <end position="35"/>
    </location>
</feature>
<organism>
    <name type="scientific">Alteromonas mediterranea (strain DSM 17117 / CIP 110805 / LMG 28347 / Deep ecotype)</name>
    <dbReference type="NCBI Taxonomy" id="1774373"/>
    <lineage>
        <taxon>Bacteria</taxon>
        <taxon>Pseudomonadati</taxon>
        <taxon>Pseudomonadota</taxon>
        <taxon>Gammaproteobacteria</taxon>
        <taxon>Alteromonadales</taxon>
        <taxon>Alteromonadaceae</taxon>
        <taxon>Alteromonas/Salinimonas group</taxon>
        <taxon>Alteromonas</taxon>
    </lineage>
</organism>
<name>RL15_ALTMD</name>
<comment type="function">
    <text evidence="1">Binds to the 23S rRNA.</text>
</comment>
<comment type="subunit">
    <text evidence="1">Part of the 50S ribosomal subunit.</text>
</comment>
<comment type="similarity">
    <text evidence="1">Belongs to the universal ribosomal protein uL15 family.</text>
</comment>
<sequence length="144" mass="14922">MRLNTISPAEGSKPTGKRSGRGIGSGLGKTGGVGHKGQKSRSGGRVKPGFEGGQMPIQRRLPKFGFTSRKSFVTDQVTLAEIAKVDGDTASLETLKAAGLVKKEIQFVKVVKSGEVSRAVTVSGLKVTKGAKEAIEAAGGKVEE</sequence>
<accession>B4RT47</accession>
<accession>F2GAJ3</accession>
<evidence type="ECO:0000255" key="1">
    <source>
        <dbReference type="HAMAP-Rule" id="MF_01341"/>
    </source>
</evidence>
<evidence type="ECO:0000256" key="2">
    <source>
        <dbReference type="SAM" id="MobiDB-lite"/>
    </source>
</evidence>
<evidence type="ECO:0000305" key="3"/>
<protein>
    <recommendedName>
        <fullName evidence="1">Large ribosomal subunit protein uL15</fullName>
    </recommendedName>
    <alternativeName>
        <fullName evidence="3">50S ribosomal protein L15</fullName>
    </alternativeName>
</protein>
<dbReference type="EMBL" id="CP001103">
    <property type="protein sequence ID" value="AEA98927.1"/>
    <property type="molecule type" value="Genomic_DNA"/>
</dbReference>
<dbReference type="RefSeq" id="WP_012519219.1">
    <property type="nucleotide sequence ID" value="NC_011138.3"/>
</dbReference>
<dbReference type="SMR" id="B4RT47"/>
<dbReference type="GeneID" id="56343827"/>
<dbReference type="KEGG" id="amc:MADE_1013965"/>
<dbReference type="HOGENOM" id="CLU_055188_4_2_6"/>
<dbReference type="Proteomes" id="UP000001870">
    <property type="component" value="Chromosome"/>
</dbReference>
<dbReference type="GO" id="GO:0022625">
    <property type="term" value="C:cytosolic large ribosomal subunit"/>
    <property type="evidence" value="ECO:0007669"/>
    <property type="project" value="TreeGrafter"/>
</dbReference>
<dbReference type="GO" id="GO:0019843">
    <property type="term" value="F:rRNA binding"/>
    <property type="evidence" value="ECO:0007669"/>
    <property type="project" value="UniProtKB-UniRule"/>
</dbReference>
<dbReference type="GO" id="GO:0003735">
    <property type="term" value="F:structural constituent of ribosome"/>
    <property type="evidence" value="ECO:0007669"/>
    <property type="project" value="InterPro"/>
</dbReference>
<dbReference type="GO" id="GO:0006412">
    <property type="term" value="P:translation"/>
    <property type="evidence" value="ECO:0007669"/>
    <property type="project" value="UniProtKB-UniRule"/>
</dbReference>
<dbReference type="Gene3D" id="3.100.10.10">
    <property type="match status" value="1"/>
</dbReference>
<dbReference type="HAMAP" id="MF_01341">
    <property type="entry name" value="Ribosomal_uL15"/>
    <property type="match status" value="1"/>
</dbReference>
<dbReference type="InterPro" id="IPR030878">
    <property type="entry name" value="Ribosomal_uL15"/>
</dbReference>
<dbReference type="InterPro" id="IPR021131">
    <property type="entry name" value="Ribosomal_uL15/eL18"/>
</dbReference>
<dbReference type="InterPro" id="IPR036227">
    <property type="entry name" value="Ribosomal_uL15/eL18_sf"/>
</dbReference>
<dbReference type="InterPro" id="IPR005749">
    <property type="entry name" value="Ribosomal_uL15_bac-type"/>
</dbReference>
<dbReference type="NCBIfam" id="TIGR01071">
    <property type="entry name" value="rplO_bact"/>
    <property type="match status" value="1"/>
</dbReference>
<dbReference type="PANTHER" id="PTHR12934">
    <property type="entry name" value="50S RIBOSOMAL PROTEIN L15"/>
    <property type="match status" value="1"/>
</dbReference>
<dbReference type="PANTHER" id="PTHR12934:SF11">
    <property type="entry name" value="LARGE RIBOSOMAL SUBUNIT PROTEIN UL15M"/>
    <property type="match status" value="1"/>
</dbReference>
<dbReference type="Pfam" id="PF00828">
    <property type="entry name" value="Ribosomal_L27A"/>
    <property type="match status" value="1"/>
</dbReference>
<dbReference type="SUPFAM" id="SSF52080">
    <property type="entry name" value="Ribosomal proteins L15p and L18e"/>
    <property type="match status" value="1"/>
</dbReference>
<gene>
    <name evidence="1" type="primary">rplO</name>
    <name type="ordered locus">MADE_1013965</name>
</gene>
<proteinExistence type="inferred from homology"/>
<reference key="1">
    <citation type="journal article" date="2008" name="ISME J.">
        <title>Comparative genomics of two ecotypes of the marine planktonic copiotroph Alteromonas macleodii suggests alternative lifestyles associated with different kinds of particulate organic matter.</title>
        <authorList>
            <person name="Ivars-Martinez E."/>
            <person name="Martin-Cuadrado A.-B."/>
            <person name="D'Auria G."/>
            <person name="Mira A."/>
            <person name="Ferriera S."/>
            <person name="Johnson J."/>
            <person name="Friedman R."/>
            <person name="Rodriguez-Valera F."/>
        </authorList>
    </citation>
    <scope>NUCLEOTIDE SEQUENCE [LARGE SCALE GENOMIC DNA]</scope>
    <source>
        <strain>DSM 17117 / CIP 110805 / LMG 28347 / Deep ecotype</strain>
    </source>
</reference>